<name>GSA_CHLPN</name>
<protein>
    <recommendedName>
        <fullName evidence="1">Glutamate-1-semialdehyde 2,1-aminomutase</fullName>
        <shortName evidence="1">GSA</shortName>
        <ecNumber evidence="1">5.4.3.8</ecNumber>
    </recommendedName>
    <alternativeName>
        <fullName evidence="1">Glutamate-1-semialdehyde aminotransferase</fullName>
        <shortName evidence="1">GSA-AT</shortName>
    </alternativeName>
</protein>
<accession>Q9JRW9</accession>
<accession>Q9Z945</accession>
<keyword id="KW-0963">Cytoplasm</keyword>
<keyword id="KW-0413">Isomerase</keyword>
<keyword id="KW-0627">Porphyrin biosynthesis</keyword>
<keyword id="KW-0663">Pyridoxal phosphate</keyword>
<comment type="catalytic activity">
    <reaction evidence="1">
        <text>(S)-4-amino-5-oxopentanoate = 5-aminolevulinate</text>
        <dbReference type="Rhea" id="RHEA:14265"/>
        <dbReference type="ChEBI" id="CHEBI:57501"/>
        <dbReference type="ChEBI" id="CHEBI:356416"/>
        <dbReference type="EC" id="5.4.3.8"/>
    </reaction>
</comment>
<comment type="cofactor">
    <cofactor evidence="1">
        <name>pyridoxal 5'-phosphate</name>
        <dbReference type="ChEBI" id="CHEBI:597326"/>
    </cofactor>
</comment>
<comment type="pathway">
    <text evidence="1">Porphyrin-containing compound metabolism; protoporphyrin-IX biosynthesis; 5-aminolevulinate from L-glutamyl-tRNA(Glu): step 2/2.</text>
</comment>
<comment type="subunit">
    <text evidence="1">Homodimer.</text>
</comment>
<comment type="subcellular location">
    <subcellularLocation>
        <location evidence="1">Cytoplasm</location>
    </subcellularLocation>
</comment>
<comment type="similarity">
    <text evidence="1">Belongs to the class-III pyridoxal-phosphate-dependent aminotransferase family. HemL subfamily.</text>
</comment>
<evidence type="ECO:0000255" key="1">
    <source>
        <dbReference type="HAMAP-Rule" id="MF_00375"/>
    </source>
</evidence>
<dbReference type="EC" id="5.4.3.8" evidence="1"/>
<dbReference type="EMBL" id="AE001363">
    <property type="protein sequence ID" value="AAD18291.1"/>
    <property type="molecule type" value="Genomic_DNA"/>
</dbReference>
<dbReference type="EMBL" id="AE002161">
    <property type="protein sequence ID" value="AAF38449.1"/>
    <property type="molecule type" value="Genomic_DNA"/>
</dbReference>
<dbReference type="EMBL" id="BA000008">
    <property type="protein sequence ID" value="BAA98348.1"/>
    <property type="molecule type" value="Genomic_DNA"/>
</dbReference>
<dbReference type="EMBL" id="AE009440">
    <property type="protein sequence ID" value="AAP98072.1"/>
    <property type="molecule type" value="Genomic_DNA"/>
</dbReference>
<dbReference type="PIR" id="B86508">
    <property type="entry name" value="B86508"/>
</dbReference>
<dbReference type="PIR" id="F81555">
    <property type="entry name" value="F81555"/>
</dbReference>
<dbReference type="PIR" id="G72114">
    <property type="entry name" value="G72114"/>
</dbReference>
<dbReference type="RefSeq" id="NP_224346.1">
    <property type="nucleotide sequence ID" value="NC_000922.1"/>
</dbReference>
<dbReference type="RefSeq" id="WP_010882788.1">
    <property type="nucleotide sequence ID" value="NZ_LN847257.1"/>
</dbReference>
<dbReference type="SMR" id="Q9JRW9"/>
<dbReference type="STRING" id="406984.CPK_ORF00650"/>
<dbReference type="GeneID" id="45050183"/>
<dbReference type="KEGG" id="cpa:CP_0634"/>
<dbReference type="KEGG" id="cpj:hemL"/>
<dbReference type="KEGG" id="cpn:CPn_0138"/>
<dbReference type="KEGG" id="cpt:CpB0139"/>
<dbReference type="PATRIC" id="fig|115713.3.peg.155"/>
<dbReference type="eggNOG" id="COG0001">
    <property type="taxonomic scope" value="Bacteria"/>
</dbReference>
<dbReference type="HOGENOM" id="CLU_016922_1_5_0"/>
<dbReference type="OrthoDB" id="9807885at2"/>
<dbReference type="UniPathway" id="UPA00251">
    <property type="reaction ID" value="UER00317"/>
</dbReference>
<dbReference type="Proteomes" id="UP000000583">
    <property type="component" value="Chromosome"/>
</dbReference>
<dbReference type="Proteomes" id="UP000000801">
    <property type="component" value="Chromosome"/>
</dbReference>
<dbReference type="GO" id="GO:0005737">
    <property type="term" value="C:cytoplasm"/>
    <property type="evidence" value="ECO:0007669"/>
    <property type="project" value="UniProtKB-SubCell"/>
</dbReference>
<dbReference type="GO" id="GO:0042286">
    <property type="term" value="F:glutamate-1-semialdehyde 2,1-aminomutase activity"/>
    <property type="evidence" value="ECO:0007669"/>
    <property type="project" value="UniProtKB-UniRule"/>
</dbReference>
<dbReference type="GO" id="GO:0030170">
    <property type="term" value="F:pyridoxal phosphate binding"/>
    <property type="evidence" value="ECO:0007669"/>
    <property type="project" value="InterPro"/>
</dbReference>
<dbReference type="GO" id="GO:0008483">
    <property type="term" value="F:transaminase activity"/>
    <property type="evidence" value="ECO:0007669"/>
    <property type="project" value="InterPro"/>
</dbReference>
<dbReference type="GO" id="GO:0006782">
    <property type="term" value="P:protoporphyrinogen IX biosynthetic process"/>
    <property type="evidence" value="ECO:0007669"/>
    <property type="project" value="UniProtKB-UniRule"/>
</dbReference>
<dbReference type="CDD" id="cd00610">
    <property type="entry name" value="OAT_like"/>
    <property type="match status" value="1"/>
</dbReference>
<dbReference type="Gene3D" id="3.90.1150.10">
    <property type="entry name" value="Aspartate Aminotransferase, domain 1"/>
    <property type="match status" value="1"/>
</dbReference>
<dbReference type="Gene3D" id="3.40.640.10">
    <property type="entry name" value="Type I PLP-dependent aspartate aminotransferase-like (Major domain)"/>
    <property type="match status" value="1"/>
</dbReference>
<dbReference type="HAMAP" id="MF_00375">
    <property type="entry name" value="HemL_aminotrans_3"/>
    <property type="match status" value="1"/>
</dbReference>
<dbReference type="InterPro" id="IPR004639">
    <property type="entry name" value="4pyrrol_synth_GluAld_NH2Trfase"/>
</dbReference>
<dbReference type="InterPro" id="IPR005814">
    <property type="entry name" value="Aminotrans_3"/>
</dbReference>
<dbReference type="InterPro" id="IPR049704">
    <property type="entry name" value="Aminotrans_3_PPA_site"/>
</dbReference>
<dbReference type="InterPro" id="IPR015424">
    <property type="entry name" value="PyrdxlP-dep_Trfase"/>
</dbReference>
<dbReference type="InterPro" id="IPR015421">
    <property type="entry name" value="PyrdxlP-dep_Trfase_major"/>
</dbReference>
<dbReference type="InterPro" id="IPR015422">
    <property type="entry name" value="PyrdxlP-dep_Trfase_small"/>
</dbReference>
<dbReference type="NCBIfam" id="TIGR00713">
    <property type="entry name" value="hemL"/>
    <property type="match status" value="1"/>
</dbReference>
<dbReference type="NCBIfam" id="NF000818">
    <property type="entry name" value="PRK00062.1"/>
    <property type="match status" value="1"/>
</dbReference>
<dbReference type="NCBIfam" id="NF001864">
    <property type="entry name" value="PRK00615.1"/>
    <property type="match status" value="1"/>
</dbReference>
<dbReference type="PANTHER" id="PTHR43713">
    <property type="entry name" value="GLUTAMATE-1-SEMIALDEHYDE 2,1-AMINOMUTASE"/>
    <property type="match status" value="1"/>
</dbReference>
<dbReference type="PANTHER" id="PTHR43713:SF3">
    <property type="entry name" value="GLUTAMATE-1-SEMIALDEHYDE 2,1-AMINOMUTASE 1, CHLOROPLASTIC-RELATED"/>
    <property type="match status" value="1"/>
</dbReference>
<dbReference type="Pfam" id="PF00202">
    <property type="entry name" value="Aminotran_3"/>
    <property type="match status" value="1"/>
</dbReference>
<dbReference type="SUPFAM" id="SSF53383">
    <property type="entry name" value="PLP-dependent transferases"/>
    <property type="match status" value="1"/>
</dbReference>
<dbReference type="PROSITE" id="PS00600">
    <property type="entry name" value="AA_TRANSFER_CLASS_3"/>
    <property type="match status" value="1"/>
</dbReference>
<reference key="1">
    <citation type="journal article" date="1999" name="Nat. Genet.">
        <title>Comparative genomes of Chlamydia pneumoniae and C. trachomatis.</title>
        <authorList>
            <person name="Kalman S."/>
            <person name="Mitchell W.P."/>
            <person name="Marathe R."/>
            <person name="Lammel C.J."/>
            <person name="Fan J."/>
            <person name="Hyman R.W."/>
            <person name="Olinger L."/>
            <person name="Grimwood J."/>
            <person name="Davis R.W."/>
            <person name="Stephens R.S."/>
        </authorList>
    </citation>
    <scope>NUCLEOTIDE SEQUENCE [LARGE SCALE GENOMIC DNA]</scope>
    <source>
        <strain>CWL029</strain>
    </source>
</reference>
<reference key="2">
    <citation type="journal article" date="2000" name="Nucleic Acids Res.">
        <title>Genome sequences of Chlamydia trachomatis MoPn and Chlamydia pneumoniae AR39.</title>
        <authorList>
            <person name="Read T.D."/>
            <person name="Brunham R.C."/>
            <person name="Shen C."/>
            <person name="Gill S.R."/>
            <person name="Heidelberg J.F."/>
            <person name="White O."/>
            <person name="Hickey E.K."/>
            <person name="Peterson J.D."/>
            <person name="Utterback T.R."/>
            <person name="Berry K.J."/>
            <person name="Bass S."/>
            <person name="Linher K.D."/>
            <person name="Weidman J.F."/>
            <person name="Khouri H.M."/>
            <person name="Craven B."/>
            <person name="Bowman C."/>
            <person name="Dodson R.J."/>
            <person name="Gwinn M.L."/>
            <person name="Nelson W.C."/>
            <person name="DeBoy R.T."/>
            <person name="Kolonay J.F."/>
            <person name="McClarty G."/>
            <person name="Salzberg S.L."/>
            <person name="Eisen J.A."/>
            <person name="Fraser C.M."/>
        </authorList>
    </citation>
    <scope>NUCLEOTIDE SEQUENCE [LARGE SCALE GENOMIC DNA]</scope>
    <source>
        <strain>AR39</strain>
    </source>
</reference>
<reference key="3">
    <citation type="journal article" date="2000" name="Nucleic Acids Res.">
        <title>Comparison of whole genome sequences of Chlamydia pneumoniae J138 from Japan and CWL029 from USA.</title>
        <authorList>
            <person name="Shirai M."/>
            <person name="Hirakawa H."/>
            <person name="Kimoto M."/>
            <person name="Tabuchi M."/>
            <person name="Kishi F."/>
            <person name="Ouchi K."/>
            <person name="Shiba T."/>
            <person name="Ishii K."/>
            <person name="Hattori M."/>
            <person name="Kuhara S."/>
            <person name="Nakazawa T."/>
        </authorList>
    </citation>
    <scope>NUCLEOTIDE SEQUENCE [LARGE SCALE GENOMIC DNA]</scope>
    <source>
        <strain>J138</strain>
    </source>
</reference>
<reference key="4">
    <citation type="submission" date="2002-05" db="EMBL/GenBank/DDBJ databases">
        <title>The genome sequence of Chlamydia pneumoniae TW183 and comparison with other Chlamydia strains based on whole genome sequence analysis.</title>
        <authorList>
            <person name="Geng M.M."/>
            <person name="Schuhmacher A."/>
            <person name="Muehldorfer I."/>
            <person name="Bensch K.W."/>
            <person name="Schaefer K.P."/>
            <person name="Schneider S."/>
            <person name="Pohl T."/>
            <person name="Essig A."/>
            <person name="Marre R."/>
            <person name="Melchers K."/>
        </authorList>
    </citation>
    <scope>NUCLEOTIDE SEQUENCE [LARGE SCALE GENOMIC DNA]</scope>
    <source>
        <strain>TW-183</strain>
    </source>
</reference>
<organism>
    <name type="scientific">Chlamydia pneumoniae</name>
    <name type="common">Chlamydophila pneumoniae</name>
    <dbReference type="NCBI Taxonomy" id="83558"/>
    <lineage>
        <taxon>Bacteria</taxon>
        <taxon>Pseudomonadati</taxon>
        <taxon>Chlamydiota</taxon>
        <taxon>Chlamydiia</taxon>
        <taxon>Chlamydiales</taxon>
        <taxon>Chlamydiaceae</taxon>
        <taxon>Chlamydia/Chlamydophila group</taxon>
        <taxon>Chlamydia</taxon>
    </lineage>
</organism>
<sequence length="440" mass="47956">MLNCSNQKHTVTFEEACQVFPGGVNSPVRACRSVGVTPPIVSSAQGDIFLDTHGREFIDFCGGWGALIHGHSHPKIVKAIQKTALKGTSYGLTSEEEILFATMLLSSLKLKEHKIRFVSSGTEATMTAVRLARGITNRSIIIKFIGGYHGHADTLLGGISTTEETIDNLTSLIHTPSPHSLLISLPYNNSQILHHVMEALGPQVAGIIFEPICANMGIVLPKAEFLDDIIELCKRFGSLSIMDEVVTGFRVAFQGAKDIFNLSPDITIYGKILGGGLPAAALVGHRSILDHLMPEGTIFQAGTMSGNFLAMATGHAAIQLCQSEGFYDHLSQLEALFYSPIEEEIRSQGFPVSLVHQGTMFSLFFTESAPTNFDEAKNSDVEKFQTFYSEVFDNGVYLSPSPLEANFISSAHTEENLTYAQNIIIDSLIKIFDSSAQRFF</sequence>
<proteinExistence type="inferred from homology"/>
<feature type="chain" id="PRO_0000120399" description="Glutamate-1-semialdehyde 2,1-aminomutase">
    <location>
        <begin position="1"/>
        <end position="440"/>
    </location>
</feature>
<feature type="modified residue" description="N6-(pyridoxal phosphate)lysine" evidence="1">
    <location>
        <position position="271"/>
    </location>
</feature>
<feature type="sequence variant" description="In strain: CWL029 and TW-183.">
    <original>K</original>
    <variation>Q</variation>
    <location>
        <position position="257"/>
    </location>
</feature>
<gene>
    <name evidence="1" type="primary">hemL</name>
    <name type="ordered locus">CPn_0138</name>
    <name type="ordered locus">CP_0634</name>
    <name type="ordered locus">CpB0139</name>
</gene>